<gene>
    <name evidence="3" type="primary">CD59</name>
</gene>
<accession>P46657</accession>
<dbReference type="EMBL" id="L22860">
    <property type="protein sequence ID" value="AAA35398.1"/>
    <property type="molecule type" value="Genomic_DNA"/>
</dbReference>
<dbReference type="SMR" id="P46657"/>
<dbReference type="GlyCosmos" id="P46657">
    <property type="glycosylation" value="1 site, No reported glycans"/>
</dbReference>
<dbReference type="GO" id="GO:0005886">
    <property type="term" value="C:plasma membrane"/>
    <property type="evidence" value="ECO:0007669"/>
    <property type="project" value="UniProtKB-SubCell"/>
</dbReference>
<dbReference type="GO" id="GO:0098552">
    <property type="term" value="C:side of membrane"/>
    <property type="evidence" value="ECO:0007669"/>
    <property type="project" value="UniProtKB-KW"/>
</dbReference>
<dbReference type="GO" id="GO:0001848">
    <property type="term" value="F:complement binding"/>
    <property type="evidence" value="ECO:0007669"/>
    <property type="project" value="TreeGrafter"/>
</dbReference>
<dbReference type="GO" id="GO:0001971">
    <property type="term" value="P:negative regulation of activation of membrane attack complex"/>
    <property type="evidence" value="ECO:0007669"/>
    <property type="project" value="TreeGrafter"/>
</dbReference>
<dbReference type="CDD" id="cd23554">
    <property type="entry name" value="TFP_LU_ECD_CD59"/>
    <property type="match status" value="1"/>
</dbReference>
<dbReference type="Gene3D" id="2.10.60.10">
    <property type="entry name" value="CD59"/>
    <property type="match status" value="1"/>
</dbReference>
<dbReference type="InterPro" id="IPR056949">
    <property type="entry name" value="CD59"/>
</dbReference>
<dbReference type="InterPro" id="IPR018363">
    <property type="entry name" value="CD59_antigen_CS"/>
</dbReference>
<dbReference type="InterPro" id="IPR016054">
    <property type="entry name" value="LY6_UPA_recep-like"/>
</dbReference>
<dbReference type="InterPro" id="IPR045860">
    <property type="entry name" value="Snake_toxin-like_sf"/>
</dbReference>
<dbReference type="PANTHER" id="PTHR10036">
    <property type="entry name" value="CD59 GLYCOPROTEIN"/>
    <property type="match status" value="1"/>
</dbReference>
<dbReference type="PANTHER" id="PTHR10036:SF24">
    <property type="entry name" value="CD59 GLYCOPROTEIN"/>
    <property type="match status" value="1"/>
</dbReference>
<dbReference type="Pfam" id="PF25152">
    <property type="entry name" value="CD59"/>
    <property type="match status" value="1"/>
</dbReference>
<dbReference type="SMART" id="SM00134">
    <property type="entry name" value="LU"/>
    <property type="match status" value="1"/>
</dbReference>
<dbReference type="SUPFAM" id="SSF57302">
    <property type="entry name" value="Snake toxin-like"/>
    <property type="match status" value="1"/>
</dbReference>
<dbReference type="PROSITE" id="PS00983">
    <property type="entry name" value="LY6_UPAR"/>
    <property type="match status" value="1"/>
</dbReference>
<comment type="function">
    <text evidence="1">Potent inhibitor of the complement membrane attack complex (MAC) action, which protects self-cells from damage during complement activation. Acts by binding to the beta-haipins of C8 (C8A and C8B) components of the assembling MAC, forming an intermolecular beta-sheet that prevents incorporation of the multiple copies of C9 required for complete formation of the osmolytic pore.</text>
</comment>
<comment type="subunit">
    <text evidence="1">Interacts with T-cell surface antigen CD2.</text>
</comment>
<comment type="subcellular location">
    <subcellularLocation>
        <location evidence="1">Cell membrane</location>
        <topology evidence="1">Lipid-anchor</topology>
        <topology evidence="1">GPI-anchor</topology>
    </subcellularLocation>
    <subcellularLocation>
        <location evidence="1">Secreted</location>
    </subcellularLocation>
    <text evidence="1">Localizes to the cell surface. Soluble form found in a number of tissues.</text>
</comment>
<comment type="PTM">
    <text evidence="1">N- and O-glycosylated.</text>
</comment>
<feature type="signal peptide" evidence="1">
    <location>
        <begin position="1"/>
        <end position="25"/>
    </location>
</feature>
<feature type="chain" id="PRO_0000036104" description="CD59 glycoprotein">
    <location>
        <begin position="26"/>
        <end position="102"/>
    </location>
</feature>
<feature type="propeptide" id="PRO_0000036105" description="Removed in mature form" evidence="1">
    <location>
        <begin position="103"/>
        <end position="128"/>
    </location>
</feature>
<feature type="domain" description="UPAR/Ly6">
    <location>
        <begin position="26"/>
        <end position="108"/>
    </location>
</feature>
<feature type="lipid moiety-binding region" description="GPI-anchor amidated asparagine" evidence="1">
    <location>
        <position position="102"/>
    </location>
</feature>
<feature type="glycosylation site" description="N-linked (GlcNAc...) asparagine" evidence="2">
    <location>
        <position position="43"/>
    </location>
</feature>
<feature type="disulfide bond" evidence="1">
    <location>
        <begin position="28"/>
        <end position="51"/>
    </location>
</feature>
<feature type="disulfide bond" evidence="1">
    <location>
        <begin position="31"/>
        <end position="38"/>
    </location>
</feature>
<feature type="disulfide bond" evidence="1">
    <location>
        <begin position="44"/>
        <end position="64"/>
    </location>
</feature>
<feature type="disulfide bond" evidence="1">
    <location>
        <begin position="70"/>
        <end position="88"/>
    </location>
</feature>
<feature type="disulfide bond" evidence="1">
    <location>
        <begin position="89"/>
        <end position="94"/>
    </location>
</feature>
<protein>
    <recommendedName>
        <fullName>CD59 glycoprotein</fullName>
    </recommendedName>
    <alternativeName>
        <fullName>MAC-inhibitory protein</fullName>
        <shortName>MAC-IP</shortName>
    </alternativeName>
    <alternativeName>
        <fullName>Membrane attack complex inhibition factor</fullName>
        <shortName>MACIF</shortName>
    </alternativeName>
    <alternativeName>
        <fullName>Protectin</fullName>
    </alternativeName>
    <cdAntigenName>CD59</cdAntigenName>
</protein>
<name>CD59_CALSQ</name>
<organism>
    <name type="scientific">Callithrix sp.</name>
    <name type="common">Marmoset</name>
    <dbReference type="NCBI Taxonomy" id="9485"/>
    <lineage>
        <taxon>Eukaryota</taxon>
        <taxon>Metazoa</taxon>
        <taxon>Chordata</taxon>
        <taxon>Craniata</taxon>
        <taxon>Vertebrata</taxon>
        <taxon>Euteleostomi</taxon>
        <taxon>Mammalia</taxon>
        <taxon>Eutheria</taxon>
        <taxon>Euarchontoglires</taxon>
        <taxon>Primates</taxon>
        <taxon>Haplorrhini</taxon>
        <taxon>Platyrrhini</taxon>
        <taxon>Cebidae</taxon>
        <taxon>Callitrichinae</taxon>
        <taxon>Callithrix</taxon>
        <taxon>Callithrix</taxon>
    </lineage>
</organism>
<reference key="1">
    <citation type="journal article" date="1995" name="Immunogenetics">
        <title>Primate terminal complement inhibitor homologues of human CD59.</title>
        <authorList>
            <person name="Fodor W.L."/>
            <person name="Rollins S.A."/>
            <person name="Bianco-Caron S."/>
            <person name="Burton W.V."/>
            <person name="Guilmette E.R."/>
            <person name="Rother R.P."/>
            <person name="Zavoico G.B."/>
            <person name="Squinto S.P."/>
        </authorList>
    </citation>
    <scope>NUCLEOTIDE SEQUENCE [GENOMIC DNA]</scope>
</reference>
<proteinExistence type="inferred from homology"/>
<sequence>MGIQGGSVLFGLLLILAVFCHSGHSLQCYSCPYSTARCTTTTNCTSNLDSCLIAKAGLRVYYRCWKFEDCTFRQLSNQLSENELKYHCCRENLCNFNGILENGGTTLSKKTVLLLVTPFLAAAWSLHP</sequence>
<keyword id="KW-1003">Cell membrane</keyword>
<keyword id="KW-1015">Disulfide bond</keyword>
<keyword id="KW-0325">Glycoprotein</keyword>
<keyword id="KW-0336">GPI-anchor</keyword>
<keyword id="KW-0449">Lipoprotein</keyword>
<keyword id="KW-0472">Membrane</keyword>
<keyword id="KW-0964">Secreted</keyword>
<keyword id="KW-0732">Signal</keyword>
<evidence type="ECO:0000250" key="1">
    <source>
        <dbReference type="UniProtKB" id="P13987"/>
    </source>
</evidence>
<evidence type="ECO:0000255" key="2"/>
<evidence type="ECO:0000303" key="3">
    <source>
    </source>
</evidence>